<reference key="1">
    <citation type="submission" date="2005-10" db="EMBL/GenBank/DDBJ databases">
        <title>Complete sequence of Pelobacter carbinolicus DSM 2380.</title>
        <authorList>
            <person name="Copeland A."/>
            <person name="Lucas S."/>
            <person name="Lapidus A."/>
            <person name="Barry K."/>
            <person name="Detter J.C."/>
            <person name="Glavina T."/>
            <person name="Hammon N."/>
            <person name="Israni S."/>
            <person name="Pitluck S."/>
            <person name="Chertkov O."/>
            <person name="Schmutz J."/>
            <person name="Larimer F."/>
            <person name="Land M."/>
            <person name="Kyrpides N."/>
            <person name="Ivanova N."/>
            <person name="Richardson P."/>
        </authorList>
    </citation>
    <scope>NUCLEOTIDE SEQUENCE [LARGE SCALE GENOMIC DNA]</scope>
    <source>
        <strain>DSM 2380 / NBRC 103641 / GraBd1</strain>
    </source>
</reference>
<organism>
    <name type="scientific">Syntrophotalea carbinolica (strain DSM 2380 / NBRC 103641 / GraBd1)</name>
    <name type="common">Pelobacter carbinolicus</name>
    <dbReference type="NCBI Taxonomy" id="338963"/>
    <lineage>
        <taxon>Bacteria</taxon>
        <taxon>Pseudomonadati</taxon>
        <taxon>Thermodesulfobacteriota</taxon>
        <taxon>Desulfuromonadia</taxon>
        <taxon>Desulfuromonadales</taxon>
        <taxon>Syntrophotaleaceae</taxon>
        <taxon>Syntrophotalea</taxon>
    </lineage>
</organism>
<dbReference type="EC" id="2.5.1.75" evidence="1"/>
<dbReference type="EMBL" id="CP000142">
    <property type="protein sequence ID" value="ABA88554.1"/>
    <property type="molecule type" value="Genomic_DNA"/>
</dbReference>
<dbReference type="RefSeq" id="WP_011341029.1">
    <property type="nucleotide sequence ID" value="NC_007498.2"/>
</dbReference>
<dbReference type="SMR" id="Q3A503"/>
<dbReference type="STRING" id="338963.Pcar_1305"/>
<dbReference type="KEGG" id="pca:Pcar_1305"/>
<dbReference type="eggNOG" id="COG0324">
    <property type="taxonomic scope" value="Bacteria"/>
</dbReference>
<dbReference type="HOGENOM" id="CLU_032616_0_1_7"/>
<dbReference type="OrthoDB" id="9776390at2"/>
<dbReference type="Proteomes" id="UP000002534">
    <property type="component" value="Chromosome"/>
</dbReference>
<dbReference type="GO" id="GO:0005524">
    <property type="term" value="F:ATP binding"/>
    <property type="evidence" value="ECO:0007669"/>
    <property type="project" value="UniProtKB-UniRule"/>
</dbReference>
<dbReference type="GO" id="GO:0052381">
    <property type="term" value="F:tRNA dimethylallyltransferase activity"/>
    <property type="evidence" value="ECO:0007669"/>
    <property type="project" value="UniProtKB-UniRule"/>
</dbReference>
<dbReference type="GO" id="GO:0006400">
    <property type="term" value="P:tRNA modification"/>
    <property type="evidence" value="ECO:0007669"/>
    <property type="project" value="TreeGrafter"/>
</dbReference>
<dbReference type="Gene3D" id="1.10.20.140">
    <property type="match status" value="1"/>
</dbReference>
<dbReference type="Gene3D" id="3.40.50.300">
    <property type="entry name" value="P-loop containing nucleotide triphosphate hydrolases"/>
    <property type="match status" value="1"/>
</dbReference>
<dbReference type="HAMAP" id="MF_00185">
    <property type="entry name" value="IPP_trans"/>
    <property type="match status" value="1"/>
</dbReference>
<dbReference type="InterPro" id="IPR039657">
    <property type="entry name" value="Dimethylallyltransferase"/>
</dbReference>
<dbReference type="InterPro" id="IPR018022">
    <property type="entry name" value="IPT"/>
</dbReference>
<dbReference type="InterPro" id="IPR027417">
    <property type="entry name" value="P-loop_NTPase"/>
</dbReference>
<dbReference type="NCBIfam" id="TIGR00174">
    <property type="entry name" value="miaA"/>
    <property type="match status" value="1"/>
</dbReference>
<dbReference type="PANTHER" id="PTHR11088">
    <property type="entry name" value="TRNA DIMETHYLALLYLTRANSFERASE"/>
    <property type="match status" value="1"/>
</dbReference>
<dbReference type="PANTHER" id="PTHR11088:SF60">
    <property type="entry name" value="TRNA DIMETHYLALLYLTRANSFERASE"/>
    <property type="match status" value="1"/>
</dbReference>
<dbReference type="Pfam" id="PF01715">
    <property type="entry name" value="IPPT"/>
    <property type="match status" value="1"/>
</dbReference>
<dbReference type="SUPFAM" id="SSF52540">
    <property type="entry name" value="P-loop containing nucleoside triphosphate hydrolases"/>
    <property type="match status" value="2"/>
</dbReference>
<gene>
    <name evidence="1" type="primary">miaA1</name>
    <name type="ordered locus">Pcar_1305</name>
</gene>
<evidence type="ECO:0000255" key="1">
    <source>
        <dbReference type="HAMAP-Rule" id="MF_00185"/>
    </source>
</evidence>
<sequence length="314" mass="35369">MIFDHNDKRPPIVVLCGPTAAGKTALAVRLAGELPVEVVSADSRQVYRHMDIGTAKPTSEELAAVPHHLIDVVDPDENFTAGNFCRLGRQALNDILGRNRLPIVVGGTGLYIQALLHGLIDVPDGDSELRATLLRAEQLHGEGTLYQRLQIVDPVLAKRLPPNDLVRIVRGLEVYELCNRRLSDLQAEHAGQKSPYRVLTLGLTMSREALYERINHRVWRMLEDGLAQEVEFLLKRGYAAECKAMQTIGYRELVQHVLGNLSMDEAVRLIQRDTRRYAKRQLTWFNKVNSIIWLDSFGEFAKVLKLIDSFIYAA</sequence>
<proteinExistence type="inferred from homology"/>
<keyword id="KW-0067">ATP-binding</keyword>
<keyword id="KW-0460">Magnesium</keyword>
<keyword id="KW-0547">Nucleotide-binding</keyword>
<keyword id="KW-1185">Reference proteome</keyword>
<keyword id="KW-0808">Transferase</keyword>
<keyword id="KW-0819">tRNA processing</keyword>
<protein>
    <recommendedName>
        <fullName evidence="1">tRNA dimethylallyltransferase 1</fullName>
        <ecNumber evidence="1">2.5.1.75</ecNumber>
    </recommendedName>
    <alternativeName>
        <fullName evidence="1">Dimethylallyl diphosphate:tRNA dimethylallyltransferase 1</fullName>
        <shortName evidence="1">DMAPP:tRNA dimethylallyltransferase 1</shortName>
        <shortName evidence="1">DMATase 1</shortName>
    </alternativeName>
    <alternativeName>
        <fullName evidence="1">Isopentenyl-diphosphate:tRNA isopentenyltransferase 1</fullName>
        <shortName evidence="1">IPP transferase 1</shortName>
        <shortName evidence="1">IPPT 1</shortName>
        <shortName evidence="1">IPTase 1</shortName>
    </alternativeName>
</protein>
<name>MIAA1_SYNC1</name>
<comment type="function">
    <text evidence="1">Catalyzes the transfer of a dimethylallyl group onto the adenine at position 37 in tRNAs that read codons beginning with uridine, leading to the formation of N6-(dimethylallyl)adenosine (i(6)A).</text>
</comment>
<comment type="catalytic activity">
    <reaction evidence="1">
        <text>adenosine(37) in tRNA + dimethylallyl diphosphate = N(6)-dimethylallyladenosine(37) in tRNA + diphosphate</text>
        <dbReference type="Rhea" id="RHEA:26482"/>
        <dbReference type="Rhea" id="RHEA-COMP:10162"/>
        <dbReference type="Rhea" id="RHEA-COMP:10375"/>
        <dbReference type="ChEBI" id="CHEBI:33019"/>
        <dbReference type="ChEBI" id="CHEBI:57623"/>
        <dbReference type="ChEBI" id="CHEBI:74411"/>
        <dbReference type="ChEBI" id="CHEBI:74415"/>
        <dbReference type="EC" id="2.5.1.75"/>
    </reaction>
</comment>
<comment type="cofactor">
    <cofactor evidence="1">
        <name>Mg(2+)</name>
        <dbReference type="ChEBI" id="CHEBI:18420"/>
    </cofactor>
</comment>
<comment type="subunit">
    <text evidence="1">Monomer.</text>
</comment>
<comment type="similarity">
    <text evidence="1">Belongs to the IPP transferase family.</text>
</comment>
<accession>Q3A503</accession>
<feature type="chain" id="PRO_0000377255" description="tRNA dimethylallyltransferase 1">
    <location>
        <begin position="1"/>
        <end position="314"/>
    </location>
</feature>
<feature type="region of interest" description="Interaction with substrate tRNA" evidence="1">
    <location>
        <begin position="42"/>
        <end position="45"/>
    </location>
</feature>
<feature type="binding site" evidence="1">
    <location>
        <begin position="17"/>
        <end position="24"/>
    </location>
    <ligand>
        <name>ATP</name>
        <dbReference type="ChEBI" id="CHEBI:30616"/>
    </ligand>
</feature>
<feature type="binding site" evidence="1">
    <location>
        <begin position="19"/>
        <end position="24"/>
    </location>
    <ligand>
        <name>substrate</name>
    </ligand>
</feature>
<feature type="site" description="Interaction with substrate tRNA" evidence="1">
    <location>
        <position position="108"/>
    </location>
</feature>
<feature type="site" description="Interaction with substrate tRNA" evidence="1">
    <location>
        <position position="130"/>
    </location>
</feature>